<comment type="function">
    <text evidence="1">Catalyzes the decarboxylation of orotidine 5'-monophosphate (OMP) to uridine 5'-monophosphate (UMP).</text>
</comment>
<comment type="catalytic activity">
    <reaction evidence="1">
        <text>orotidine 5'-phosphate + H(+) = UMP + CO2</text>
        <dbReference type="Rhea" id="RHEA:11596"/>
        <dbReference type="ChEBI" id="CHEBI:15378"/>
        <dbReference type="ChEBI" id="CHEBI:16526"/>
        <dbReference type="ChEBI" id="CHEBI:57538"/>
        <dbReference type="ChEBI" id="CHEBI:57865"/>
        <dbReference type="EC" id="4.1.1.23"/>
    </reaction>
</comment>
<comment type="pathway">
    <text evidence="1">Pyrimidine metabolism; UMP biosynthesis via de novo pathway; UMP from orotate: step 2/2.</text>
</comment>
<comment type="subunit">
    <text evidence="1">Homodimer.</text>
</comment>
<comment type="similarity">
    <text evidence="1">Belongs to the OMP decarboxylase family. Type 1 subfamily.</text>
</comment>
<accession>A0AJT7</accession>
<proteinExistence type="inferred from homology"/>
<evidence type="ECO:0000255" key="1">
    <source>
        <dbReference type="HAMAP-Rule" id="MF_01200"/>
    </source>
</evidence>
<sequence length="233" mass="25438">MNKPIIALDFQTYEEVETFLANFSGESLSVKVGMELFYSNGPIIVEKIKQQNHAIFLDLKLHDIPNTVKSAMISLAKLGVDMVNVHAAGGKKMMEFAREGLEIGAGSGKRPKLIAVTQLTSTSEAAMQTEQIVKASLLESVLHYSDLTKQAGLDGVVCSALEAEEIRLQNGEDFLRVTPGIRLLSDAANDQIRVVTPEKARVIGSTNIVVGRSITRANDPVKAYNQVLKEWNV</sequence>
<dbReference type="EC" id="4.1.1.23" evidence="1"/>
<dbReference type="EMBL" id="AM263198">
    <property type="protein sequence ID" value="CAK21269.1"/>
    <property type="molecule type" value="Genomic_DNA"/>
</dbReference>
<dbReference type="RefSeq" id="WP_011702621.1">
    <property type="nucleotide sequence ID" value="NC_008555.1"/>
</dbReference>
<dbReference type="SMR" id="A0AJT7"/>
<dbReference type="STRING" id="386043.lwe1851"/>
<dbReference type="GeneID" id="61189752"/>
<dbReference type="KEGG" id="lwe:lwe1851"/>
<dbReference type="eggNOG" id="COG0284">
    <property type="taxonomic scope" value="Bacteria"/>
</dbReference>
<dbReference type="HOGENOM" id="CLU_067069_1_1_9"/>
<dbReference type="OrthoDB" id="9806203at2"/>
<dbReference type="UniPathway" id="UPA00070">
    <property type="reaction ID" value="UER00120"/>
</dbReference>
<dbReference type="Proteomes" id="UP000000779">
    <property type="component" value="Chromosome"/>
</dbReference>
<dbReference type="GO" id="GO:0005829">
    <property type="term" value="C:cytosol"/>
    <property type="evidence" value="ECO:0007669"/>
    <property type="project" value="TreeGrafter"/>
</dbReference>
<dbReference type="GO" id="GO:0004590">
    <property type="term" value="F:orotidine-5'-phosphate decarboxylase activity"/>
    <property type="evidence" value="ECO:0007669"/>
    <property type="project" value="UniProtKB-UniRule"/>
</dbReference>
<dbReference type="GO" id="GO:0006207">
    <property type="term" value="P:'de novo' pyrimidine nucleobase biosynthetic process"/>
    <property type="evidence" value="ECO:0007669"/>
    <property type="project" value="InterPro"/>
</dbReference>
<dbReference type="GO" id="GO:0044205">
    <property type="term" value="P:'de novo' UMP biosynthetic process"/>
    <property type="evidence" value="ECO:0007669"/>
    <property type="project" value="UniProtKB-UniRule"/>
</dbReference>
<dbReference type="CDD" id="cd04725">
    <property type="entry name" value="OMP_decarboxylase_like"/>
    <property type="match status" value="1"/>
</dbReference>
<dbReference type="FunFam" id="3.20.20.70:FF:000015">
    <property type="entry name" value="Orotidine 5'-phosphate decarboxylase"/>
    <property type="match status" value="1"/>
</dbReference>
<dbReference type="Gene3D" id="3.20.20.70">
    <property type="entry name" value="Aldolase class I"/>
    <property type="match status" value="1"/>
</dbReference>
<dbReference type="HAMAP" id="MF_01200_B">
    <property type="entry name" value="OMPdecase_type1_B"/>
    <property type="match status" value="1"/>
</dbReference>
<dbReference type="InterPro" id="IPR013785">
    <property type="entry name" value="Aldolase_TIM"/>
</dbReference>
<dbReference type="InterPro" id="IPR014732">
    <property type="entry name" value="OMPdecase"/>
</dbReference>
<dbReference type="InterPro" id="IPR018089">
    <property type="entry name" value="OMPdecase_AS"/>
</dbReference>
<dbReference type="InterPro" id="IPR047596">
    <property type="entry name" value="OMPdecase_bac"/>
</dbReference>
<dbReference type="InterPro" id="IPR001754">
    <property type="entry name" value="OMPdeCOase_dom"/>
</dbReference>
<dbReference type="InterPro" id="IPR011060">
    <property type="entry name" value="RibuloseP-bd_barrel"/>
</dbReference>
<dbReference type="NCBIfam" id="NF001273">
    <property type="entry name" value="PRK00230.1"/>
    <property type="match status" value="1"/>
</dbReference>
<dbReference type="NCBIfam" id="TIGR01740">
    <property type="entry name" value="pyrF"/>
    <property type="match status" value="1"/>
</dbReference>
<dbReference type="PANTHER" id="PTHR32119">
    <property type="entry name" value="OROTIDINE 5'-PHOSPHATE DECARBOXYLASE"/>
    <property type="match status" value="1"/>
</dbReference>
<dbReference type="PANTHER" id="PTHR32119:SF2">
    <property type="entry name" value="OROTIDINE 5'-PHOSPHATE DECARBOXYLASE"/>
    <property type="match status" value="1"/>
</dbReference>
<dbReference type="Pfam" id="PF00215">
    <property type="entry name" value="OMPdecase"/>
    <property type="match status" value="1"/>
</dbReference>
<dbReference type="SMART" id="SM00934">
    <property type="entry name" value="OMPdecase"/>
    <property type="match status" value="1"/>
</dbReference>
<dbReference type="SUPFAM" id="SSF51366">
    <property type="entry name" value="Ribulose-phoshate binding barrel"/>
    <property type="match status" value="1"/>
</dbReference>
<dbReference type="PROSITE" id="PS00156">
    <property type="entry name" value="OMPDECASE"/>
    <property type="match status" value="1"/>
</dbReference>
<organism>
    <name type="scientific">Listeria welshimeri serovar 6b (strain ATCC 35897 / DSM 20650 / CCUG 15529 / CIP 8149 / NCTC 11857 / SLCC 5334 / V8)</name>
    <dbReference type="NCBI Taxonomy" id="386043"/>
    <lineage>
        <taxon>Bacteria</taxon>
        <taxon>Bacillati</taxon>
        <taxon>Bacillota</taxon>
        <taxon>Bacilli</taxon>
        <taxon>Bacillales</taxon>
        <taxon>Listeriaceae</taxon>
        <taxon>Listeria</taxon>
    </lineage>
</organism>
<protein>
    <recommendedName>
        <fullName evidence="1">Orotidine 5'-phosphate decarboxylase</fullName>
        <ecNumber evidence="1">4.1.1.23</ecNumber>
    </recommendedName>
    <alternativeName>
        <fullName evidence="1">OMP decarboxylase</fullName>
        <shortName evidence="1">OMPDCase</shortName>
        <shortName evidence="1">OMPdecase</shortName>
    </alternativeName>
</protein>
<reference key="1">
    <citation type="journal article" date="2006" name="J. Bacteriol.">
        <title>Whole-genome sequence of Listeria welshimeri reveals common steps in genome reduction with Listeria innocua as compared to Listeria monocytogenes.</title>
        <authorList>
            <person name="Hain T."/>
            <person name="Steinweg C."/>
            <person name="Kuenne C.T."/>
            <person name="Billion A."/>
            <person name="Ghai R."/>
            <person name="Chatterjee S.S."/>
            <person name="Domann E."/>
            <person name="Kaerst U."/>
            <person name="Goesmann A."/>
            <person name="Bekel T."/>
            <person name="Bartels D."/>
            <person name="Kaiser O."/>
            <person name="Meyer F."/>
            <person name="Puehler A."/>
            <person name="Weisshaar B."/>
            <person name="Wehland J."/>
            <person name="Liang C."/>
            <person name="Dandekar T."/>
            <person name="Lampidis R."/>
            <person name="Kreft J."/>
            <person name="Goebel W."/>
            <person name="Chakraborty T."/>
        </authorList>
    </citation>
    <scope>NUCLEOTIDE SEQUENCE [LARGE SCALE GENOMIC DNA]</scope>
    <source>
        <strain>ATCC 35897 / DSM 20650 / CCUG 15529 / CIP 8149 / NCTC 11857 / SLCC 5334 / V8</strain>
    </source>
</reference>
<gene>
    <name evidence="1" type="primary">pyrF</name>
    <name type="ordered locus">lwe1851</name>
</gene>
<keyword id="KW-0210">Decarboxylase</keyword>
<keyword id="KW-0456">Lyase</keyword>
<keyword id="KW-0665">Pyrimidine biosynthesis</keyword>
<feature type="chain" id="PRO_1000065918" description="Orotidine 5'-phosphate decarboxylase">
    <location>
        <begin position="1"/>
        <end position="233"/>
    </location>
</feature>
<feature type="active site" description="Proton donor" evidence="1">
    <location>
        <position position="60"/>
    </location>
</feature>
<feature type="binding site" evidence="1">
    <location>
        <position position="9"/>
    </location>
    <ligand>
        <name>substrate</name>
    </ligand>
</feature>
<feature type="binding site" evidence="1">
    <location>
        <position position="31"/>
    </location>
    <ligand>
        <name>substrate</name>
    </ligand>
</feature>
<feature type="binding site" evidence="1">
    <location>
        <begin position="58"/>
        <end position="67"/>
    </location>
    <ligand>
        <name>substrate</name>
    </ligand>
</feature>
<feature type="binding site" evidence="1">
    <location>
        <position position="120"/>
    </location>
    <ligand>
        <name>substrate</name>
    </ligand>
</feature>
<feature type="binding site" evidence="1">
    <location>
        <position position="182"/>
    </location>
    <ligand>
        <name>substrate</name>
    </ligand>
</feature>
<feature type="binding site" evidence="1">
    <location>
        <position position="191"/>
    </location>
    <ligand>
        <name>substrate</name>
    </ligand>
</feature>
<feature type="binding site" evidence="1">
    <location>
        <position position="211"/>
    </location>
    <ligand>
        <name>substrate</name>
    </ligand>
</feature>
<feature type="binding site" evidence="1">
    <location>
        <position position="212"/>
    </location>
    <ligand>
        <name>substrate</name>
    </ligand>
</feature>
<name>PYRF_LISW6</name>